<accession>Q8R9F8</accession>
<keyword id="KW-0963">Cytoplasm</keyword>
<keyword id="KW-0238">DNA-binding</keyword>
<keyword id="KW-1185">Reference proteome</keyword>
<keyword id="KW-0677">Repeat</keyword>
<keyword id="KW-0804">Transcription</keyword>
<keyword id="KW-0805">Transcription regulation</keyword>
<name>MRAZ_CALS4</name>
<gene>
    <name evidence="1" type="primary">mraZ</name>
    <name type="ordered locus">TTE1654</name>
</gene>
<protein>
    <recommendedName>
        <fullName>Transcriptional regulator MraZ</fullName>
    </recommendedName>
</protein>
<sequence length="143" mass="16666">MLMGQYEHTIDSKGRVIIPAKFREELGEKFVLTKGLDNCLFVYSLDEWKNIEEKLKTLPLTKKDARAFTRFFLAGAVECEVDKQGRILIPSHLREHAKIEKDVIFIGVSTRVEIWSKEVWEEYSKSTDVSFEEIAEHLDNFNI</sequence>
<comment type="subunit">
    <text evidence="1">Forms oligomers.</text>
</comment>
<comment type="subcellular location">
    <subcellularLocation>
        <location evidence="1">Cytoplasm</location>
        <location evidence="1">Nucleoid</location>
    </subcellularLocation>
</comment>
<comment type="similarity">
    <text evidence="1">Belongs to the MraZ family.</text>
</comment>
<dbReference type="EMBL" id="AE008691">
    <property type="protein sequence ID" value="AAM24856.1"/>
    <property type="molecule type" value="Genomic_DNA"/>
</dbReference>
<dbReference type="RefSeq" id="WP_011025873.1">
    <property type="nucleotide sequence ID" value="NZ_JANUCV010000001.1"/>
</dbReference>
<dbReference type="SMR" id="Q8R9F8"/>
<dbReference type="STRING" id="273068.TTE1654"/>
<dbReference type="KEGG" id="tte:TTE1654"/>
<dbReference type="eggNOG" id="COG2001">
    <property type="taxonomic scope" value="Bacteria"/>
</dbReference>
<dbReference type="HOGENOM" id="CLU_107907_0_5_9"/>
<dbReference type="OrthoDB" id="9807753at2"/>
<dbReference type="Proteomes" id="UP000000555">
    <property type="component" value="Chromosome"/>
</dbReference>
<dbReference type="GO" id="GO:0005737">
    <property type="term" value="C:cytoplasm"/>
    <property type="evidence" value="ECO:0007669"/>
    <property type="project" value="UniProtKB-UniRule"/>
</dbReference>
<dbReference type="GO" id="GO:0009295">
    <property type="term" value="C:nucleoid"/>
    <property type="evidence" value="ECO:0007669"/>
    <property type="project" value="UniProtKB-SubCell"/>
</dbReference>
<dbReference type="GO" id="GO:0003700">
    <property type="term" value="F:DNA-binding transcription factor activity"/>
    <property type="evidence" value="ECO:0007669"/>
    <property type="project" value="UniProtKB-UniRule"/>
</dbReference>
<dbReference type="GO" id="GO:0000976">
    <property type="term" value="F:transcription cis-regulatory region binding"/>
    <property type="evidence" value="ECO:0007669"/>
    <property type="project" value="TreeGrafter"/>
</dbReference>
<dbReference type="GO" id="GO:2000143">
    <property type="term" value="P:negative regulation of DNA-templated transcription initiation"/>
    <property type="evidence" value="ECO:0007669"/>
    <property type="project" value="TreeGrafter"/>
</dbReference>
<dbReference type="CDD" id="cd16321">
    <property type="entry name" value="MraZ_C"/>
    <property type="match status" value="1"/>
</dbReference>
<dbReference type="CDD" id="cd16320">
    <property type="entry name" value="MraZ_N"/>
    <property type="match status" value="1"/>
</dbReference>
<dbReference type="FunFam" id="3.40.1550.20:FF:000002">
    <property type="entry name" value="Transcriptional regulator MraZ"/>
    <property type="match status" value="1"/>
</dbReference>
<dbReference type="Gene3D" id="3.40.1550.20">
    <property type="entry name" value="Transcriptional regulator MraZ domain"/>
    <property type="match status" value="1"/>
</dbReference>
<dbReference type="HAMAP" id="MF_01008">
    <property type="entry name" value="MraZ"/>
    <property type="match status" value="1"/>
</dbReference>
<dbReference type="InterPro" id="IPR003444">
    <property type="entry name" value="MraZ"/>
</dbReference>
<dbReference type="InterPro" id="IPR035644">
    <property type="entry name" value="MraZ_C"/>
</dbReference>
<dbReference type="InterPro" id="IPR020603">
    <property type="entry name" value="MraZ_dom"/>
</dbReference>
<dbReference type="InterPro" id="IPR035642">
    <property type="entry name" value="MraZ_N"/>
</dbReference>
<dbReference type="InterPro" id="IPR038619">
    <property type="entry name" value="MraZ_sf"/>
</dbReference>
<dbReference type="InterPro" id="IPR007159">
    <property type="entry name" value="SpoVT-AbrB_dom"/>
</dbReference>
<dbReference type="InterPro" id="IPR037914">
    <property type="entry name" value="SpoVT-AbrB_sf"/>
</dbReference>
<dbReference type="NCBIfam" id="TIGR00242">
    <property type="entry name" value="division/cell wall cluster transcriptional repressor MraZ"/>
    <property type="match status" value="1"/>
</dbReference>
<dbReference type="PANTHER" id="PTHR34701">
    <property type="entry name" value="TRANSCRIPTIONAL REGULATOR MRAZ"/>
    <property type="match status" value="1"/>
</dbReference>
<dbReference type="PANTHER" id="PTHR34701:SF1">
    <property type="entry name" value="TRANSCRIPTIONAL REGULATOR MRAZ"/>
    <property type="match status" value="1"/>
</dbReference>
<dbReference type="Pfam" id="PF02381">
    <property type="entry name" value="MraZ"/>
    <property type="match status" value="2"/>
</dbReference>
<dbReference type="SUPFAM" id="SSF89447">
    <property type="entry name" value="AbrB/MazE/MraZ-like"/>
    <property type="match status" value="1"/>
</dbReference>
<dbReference type="PROSITE" id="PS51740">
    <property type="entry name" value="SPOVT_ABRB"/>
    <property type="match status" value="2"/>
</dbReference>
<proteinExistence type="inferred from homology"/>
<organism>
    <name type="scientific">Caldanaerobacter subterraneus subsp. tengcongensis (strain DSM 15242 / JCM 11007 / NBRC 100824 / MB4)</name>
    <name type="common">Thermoanaerobacter tengcongensis</name>
    <dbReference type="NCBI Taxonomy" id="273068"/>
    <lineage>
        <taxon>Bacteria</taxon>
        <taxon>Bacillati</taxon>
        <taxon>Bacillota</taxon>
        <taxon>Clostridia</taxon>
        <taxon>Thermoanaerobacterales</taxon>
        <taxon>Thermoanaerobacteraceae</taxon>
        <taxon>Caldanaerobacter</taxon>
    </lineage>
</organism>
<reference key="1">
    <citation type="journal article" date="2002" name="Genome Res.">
        <title>A complete sequence of the T. tengcongensis genome.</title>
        <authorList>
            <person name="Bao Q."/>
            <person name="Tian Y."/>
            <person name="Li W."/>
            <person name="Xu Z."/>
            <person name="Xuan Z."/>
            <person name="Hu S."/>
            <person name="Dong W."/>
            <person name="Yang J."/>
            <person name="Chen Y."/>
            <person name="Xue Y."/>
            <person name="Xu Y."/>
            <person name="Lai X."/>
            <person name="Huang L."/>
            <person name="Dong X."/>
            <person name="Ma Y."/>
            <person name="Ling L."/>
            <person name="Tan H."/>
            <person name="Chen R."/>
            <person name="Wang J."/>
            <person name="Yu J."/>
            <person name="Yang H."/>
        </authorList>
    </citation>
    <scope>NUCLEOTIDE SEQUENCE [LARGE SCALE GENOMIC DNA]</scope>
    <source>
        <strain>DSM 15242 / JCM 11007 / NBRC 100824 / MB4</strain>
    </source>
</reference>
<evidence type="ECO:0000255" key="1">
    <source>
        <dbReference type="HAMAP-Rule" id="MF_01008"/>
    </source>
</evidence>
<evidence type="ECO:0000255" key="2">
    <source>
        <dbReference type="PROSITE-ProRule" id="PRU01076"/>
    </source>
</evidence>
<feature type="chain" id="PRO_0000108550" description="Transcriptional regulator MraZ">
    <location>
        <begin position="1"/>
        <end position="143"/>
    </location>
</feature>
<feature type="domain" description="SpoVT-AbrB 1" evidence="2">
    <location>
        <begin position="5"/>
        <end position="47"/>
    </location>
</feature>
<feature type="domain" description="SpoVT-AbrB 2" evidence="2">
    <location>
        <begin position="76"/>
        <end position="119"/>
    </location>
</feature>